<gene>
    <name type="primary">lprQ</name>
    <name type="ordered locus">Rv0483</name>
    <name type="ORF">MTCY20G9.09</name>
</gene>
<protein>
    <recommendedName>
        <fullName>L,D-transpeptidase 5</fullName>
        <shortName>LDT 5</shortName>
        <ecNumber>2.3.2.-</ecNumber>
    </recommendedName>
    <alternativeName>
        <fullName>Ldt(Mt5)</fullName>
    </alternativeName>
</protein>
<comment type="function">
    <text evidence="4">Generates 3-&gt;3 cross-links in peptidoglycan, catalyzing the cleavage of the mDap(3)-D-Ala(4) bond of a tetrapeptide donor stem and the formation of a bond between the carbonyl of mDap(3) of the donor stem and the side chain of mDap(3) of the acceptor stem. Is specific for donor substrates containing a stem tetrapeptide since it cannot use pentapeptide stems.</text>
</comment>
<comment type="activity regulation">
    <text evidence="4">In contrast to other LDT paralogs, LdtMt5 is not inactivated by the beta-lactam carbapenems; beta-lactam carbapenems form covalent adducts with other LDT paralogs but the formation of covalent adducts was not detected for LdtMt5.</text>
</comment>
<comment type="pathway">
    <text>Cell wall biogenesis; peptidoglycan biosynthesis.</text>
</comment>
<name>LDT5_MYCTU</name>
<organism>
    <name type="scientific">Mycobacterium tuberculosis (strain ATCC 25618 / H37Rv)</name>
    <dbReference type="NCBI Taxonomy" id="83332"/>
    <lineage>
        <taxon>Bacteria</taxon>
        <taxon>Bacillati</taxon>
        <taxon>Actinomycetota</taxon>
        <taxon>Actinomycetes</taxon>
        <taxon>Mycobacteriales</taxon>
        <taxon>Mycobacteriaceae</taxon>
        <taxon>Mycobacterium</taxon>
        <taxon>Mycobacterium tuberculosis complex</taxon>
    </lineage>
</organism>
<proteinExistence type="evidence at protein level"/>
<keyword id="KW-0002">3D-structure</keyword>
<keyword id="KW-0012">Acyltransferase</keyword>
<keyword id="KW-0133">Cell shape</keyword>
<keyword id="KW-0961">Cell wall biogenesis/degradation</keyword>
<keyword id="KW-0573">Peptidoglycan synthesis</keyword>
<keyword id="KW-1185">Reference proteome</keyword>
<keyword id="KW-0808">Transferase</keyword>
<accession>P9WKV3</accession>
<accession>L0T6T6</accession>
<accession>P64703</accession>
<accession>Q11149</accession>
<feature type="chain" id="PRO_0000430359" description="L,D-transpeptidase 5">
    <location>
        <begin position="1"/>
        <end position="451"/>
    </location>
</feature>
<feature type="domain" description="L,D-TPase catalytic" evidence="2">
    <location>
        <begin position="263"/>
        <end position="384"/>
    </location>
</feature>
<feature type="region of interest" description="Disordered" evidence="3">
    <location>
        <begin position="417"/>
        <end position="451"/>
    </location>
</feature>
<feature type="compositionally biased region" description="Low complexity" evidence="3">
    <location>
        <begin position="437"/>
        <end position="451"/>
    </location>
</feature>
<feature type="active site" description="Proton donor/acceptor" evidence="2">
    <location>
        <position position="342"/>
    </location>
</feature>
<feature type="active site" description="Nucleophile" evidence="2">
    <location>
        <position position="360"/>
    </location>
</feature>
<feature type="binding site" evidence="1">
    <location>
        <position position="323"/>
    </location>
    <ligand>
        <name>substrate</name>
    </ligand>
</feature>
<feature type="binding site" evidence="1">
    <location>
        <begin position="337"/>
        <end position="338"/>
    </location>
    <ligand>
        <name>substrate</name>
    </ligand>
</feature>
<feature type="binding site" evidence="1">
    <location>
        <position position="362"/>
    </location>
    <ligand>
        <name>substrate</name>
    </ligand>
</feature>
<feature type="strand" evidence="6">
    <location>
        <begin position="66"/>
        <end position="71"/>
    </location>
</feature>
<feature type="strand" evidence="6">
    <location>
        <begin position="85"/>
        <end position="99"/>
    </location>
</feature>
<feature type="strand" evidence="6">
    <location>
        <begin position="108"/>
        <end position="111"/>
    </location>
</feature>
<feature type="turn" evidence="6">
    <location>
        <begin position="112"/>
        <end position="115"/>
    </location>
</feature>
<feature type="strand" evidence="6">
    <location>
        <begin position="116"/>
        <end position="119"/>
    </location>
</feature>
<feature type="strand" evidence="6">
    <location>
        <begin position="128"/>
        <end position="136"/>
    </location>
</feature>
<feature type="strand" evidence="6">
    <location>
        <begin position="138"/>
        <end position="140"/>
    </location>
</feature>
<feature type="strand" evidence="6">
    <location>
        <begin position="142"/>
        <end position="144"/>
    </location>
</feature>
<feature type="strand" evidence="6">
    <location>
        <begin position="147"/>
        <end position="151"/>
    </location>
</feature>
<feature type="strand" evidence="6">
    <location>
        <begin position="155"/>
        <end position="158"/>
    </location>
</feature>
<feature type="strand" evidence="6">
    <location>
        <begin position="160"/>
        <end position="164"/>
    </location>
</feature>
<feature type="strand" evidence="6">
    <location>
        <begin position="176"/>
        <end position="182"/>
    </location>
</feature>
<feature type="helix" evidence="6">
    <location>
        <begin position="187"/>
        <end position="191"/>
    </location>
</feature>
<feature type="strand" evidence="6">
    <location>
        <begin position="194"/>
        <end position="200"/>
    </location>
</feature>
<feature type="strand" evidence="6">
    <location>
        <begin position="204"/>
        <end position="209"/>
    </location>
</feature>
<feature type="strand" evidence="6">
    <location>
        <begin position="217"/>
        <end position="224"/>
    </location>
</feature>
<feature type="strand" evidence="6">
    <location>
        <begin position="231"/>
        <end position="236"/>
    </location>
</feature>
<feature type="strand" evidence="6">
    <location>
        <begin position="242"/>
        <end position="244"/>
    </location>
</feature>
<feature type="strand" evidence="6">
    <location>
        <begin position="247"/>
        <end position="249"/>
    </location>
</feature>
<feature type="strand" evidence="6">
    <location>
        <begin position="253"/>
        <end position="259"/>
    </location>
</feature>
<feature type="strand" evidence="6">
    <location>
        <begin position="264"/>
        <end position="268"/>
    </location>
</feature>
<feature type="helix" evidence="6">
    <location>
        <begin position="269"/>
        <end position="271"/>
    </location>
</feature>
<feature type="strand" evidence="6">
    <location>
        <begin position="273"/>
        <end position="278"/>
    </location>
</feature>
<feature type="strand" evidence="6">
    <location>
        <begin position="281"/>
        <end position="287"/>
    </location>
</feature>
<feature type="helix" evidence="6">
    <location>
        <begin position="296"/>
        <end position="298"/>
    </location>
</feature>
<feature type="strand" evidence="6">
    <location>
        <begin position="302"/>
        <end position="306"/>
    </location>
</feature>
<feature type="strand" evidence="6">
    <location>
        <begin position="310"/>
        <end position="313"/>
    </location>
</feature>
<feature type="strand" evidence="6">
    <location>
        <begin position="329"/>
        <end position="335"/>
    </location>
</feature>
<feature type="turn" evidence="6">
    <location>
        <begin position="336"/>
        <end position="338"/>
    </location>
</feature>
<feature type="strand" evidence="6">
    <location>
        <begin position="339"/>
        <end position="343"/>
    </location>
</feature>
<feature type="strand" evidence="6">
    <location>
        <begin position="360"/>
        <end position="363"/>
    </location>
</feature>
<feature type="helix" evidence="6">
    <location>
        <begin position="365"/>
        <end position="374"/>
    </location>
</feature>
<feature type="strand" evidence="6">
    <location>
        <begin position="380"/>
        <end position="385"/>
    </location>
</feature>
<feature type="strand" evidence="6">
    <location>
        <begin position="387"/>
        <end position="389"/>
    </location>
</feature>
<feature type="helix" evidence="6">
    <location>
        <begin position="392"/>
        <end position="394"/>
    </location>
</feature>
<feature type="helix" evidence="6">
    <location>
        <begin position="399"/>
        <end position="401"/>
    </location>
</feature>
<feature type="helix" evidence="6">
    <location>
        <begin position="404"/>
        <end position="408"/>
    </location>
</feature>
<feature type="strand" evidence="6">
    <location>
        <begin position="411"/>
        <end position="413"/>
    </location>
</feature>
<evidence type="ECO:0000250" key="1"/>
<evidence type="ECO:0000255" key="2">
    <source>
        <dbReference type="PROSITE-ProRule" id="PRU01373"/>
    </source>
</evidence>
<evidence type="ECO:0000256" key="3">
    <source>
        <dbReference type="SAM" id="MobiDB-lite"/>
    </source>
</evidence>
<evidence type="ECO:0000269" key="4">
    <source>
    </source>
</evidence>
<evidence type="ECO:0007744" key="5">
    <source>
        <dbReference type="PDB" id="6D5A"/>
    </source>
</evidence>
<evidence type="ECO:0007829" key="6">
    <source>
        <dbReference type="PDB" id="6D5A"/>
    </source>
</evidence>
<reference key="1">
    <citation type="journal article" date="1998" name="Nature">
        <title>Deciphering the biology of Mycobacterium tuberculosis from the complete genome sequence.</title>
        <authorList>
            <person name="Cole S.T."/>
            <person name="Brosch R."/>
            <person name="Parkhill J."/>
            <person name="Garnier T."/>
            <person name="Churcher C.M."/>
            <person name="Harris D.E."/>
            <person name="Gordon S.V."/>
            <person name="Eiglmeier K."/>
            <person name="Gas S."/>
            <person name="Barry C.E. III"/>
            <person name="Tekaia F."/>
            <person name="Badcock K."/>
            <person name="Basham D."/>
            <person name="Brown D."/>
            <person name="Chillingworth T."/>
            <person name="Connor R."/>
            <person name="Davies R.M."/>
            <person name="Devlin K."/>
            <person name="Feltwell T."/>
            <person name="Gentles S."/>
            <person name="Hamlin N."/>
            <person name="Holroyd S."/>
            <person name="Hornsby T."/>
            <person name="Jagels K."/>
            <person name="Krogh A."/>
            <person name="McLean J."/>
            <person name="Moule S."/>
            <person name="Murphy L.D."/>
            <person name="Oliver S."/>
            <person name="Osborne J."/>
            <person name="Quail M.A."/>
            <person name="Rajandream M.A."/>
            <person name="Rogers J."/>
            <person name="Rutter S."/>
            <person name="Seeger K."/>
            <person name="Skelton S."/>
            <person name="Squares S."/>
            <person name="Squares R."/>
            <person name="Sulston J.E."/>
            <person name="Taylor K."/>
            <person name="Whitehead S."/>
            <person name="Barrell B.G."/>
        </authorList>
    </citation>
    <scope>NUCLEOTIDE SEQUENCE [LARGE SCALE GENOMIC DNA]</scope>
    <source>
        <strain>ATCC 25618 / H37Rv</strain>
    </source>
</reference>
<reference key="2">
    <citation type="journal article" date="2011" name="Mol. Cell. Proteomics">
        <title>Proteogenomic analysis of Mycobacterium tuberculosis by high resolution mass spectrometry.</title>
        <authorList>
            <person name="Kelkar D.S."/>
            <person name="Kumar D."/>
            <person name="Kumar P."/>
            <person name="Balakrishnan L."/>
            <person name="Muthusamy B."/>
            <person name="Yadav A.K."/>
            <person name="Shrivastava P."/>
            <person name="Marimuthu A."/>
            <person name="Anand S."/>
            <person name="Sundaram H."/>
            <person name="Kingsbury R."/>
            <person name="Harsha H.C."/>
            <person name="Nair B."/>
            <person name="Prasad T.S."/>
            <person name="Chauhan D.S."/>
            <person name="Katoch K."/>
            <person name="Katoch V.M."/>
            <person name="Kumar P."/>
            <person name="Chaerkady R."/>
            <person name="Ramachandran S."/>
            <person name="Dash D."/>
            <person name="Pandey A."/>
        </authorList>
    </citation>
    <scope>IDENTIFICATION BY MASS SPECTROMETRY [LARGE SCALE ANALYSIS]</scope>
    <source>
        <strain>ATCC 25618 / H37Rv</strain>
    </source>
</reference>
<reference key="3">
    <citation type="journal article" date="2013" name="Antimicrob. Agents Chemother.">
        <title>In vitro cross-linking of Mycobacterium tuberculosis peptidoglycan by L,D-transpeptidases and inactivation of these enzymes by carbapenems.</title>
        <authorList>
            <person name="Cordillot M."/>
            <person name="Dubee V."/>
            <person name="Triboulet S."/>
            <person name="Dubost L."/>
            <person name="Marie A."/>
            <person name="Hugonnet J.E."/>
            <person name="Arthur M."/>
            <person name="Mainardi J.L."/>
        </authorList>
    </citation>
    <scope>FUNCTION</scope>
    <scope>CATALYTIC ACTIVITY</scope>
    <scope>SUBSTRATE SPECIFICITY</scope>
    <scope>ACTIVITY REGULATION</scope>
    <source>
        <strain>ATCC 25618 / H37Rv</strain>
    </source>
</reference>
<reference evidence="5" key="4">
    <citation type="journal article" date="2019" name="ACS Infect. Dis.">
        <title>Structural Basis for the Interaction and Processing of beta-Lactam Antibiotics by l,d-Transpeptidase 3 (LdtMt3) from Mycobacterium tuberculosis.</title>
        <authorList>
            <person name="Libreros-Zuniga G.A."/>
            <person name="Dos Santos Silva C."/>
            <person name="Salgado Ferreira R."/>
            <person name="Dias M.V.B."/>
        </authorList>
    </citation>
    <scope>X-RAY CRYSTALLOGRAPHY (2.62 ANGSTROMS) OF 50-416</scope>
</reference>
<sequence>MVIRVLFRPVSLIPVNNSSTPQSQGPISRRLALTALGFGVLAPNVLVACAGKVTKLAEKRPPPAPRLTFRPADSAADVVPIAPISVEVGDGWFQRVALTNSAGKVVAGAYSRDRTIYTITEPLGYDTTYTWSGSAVGHDGKAVPVAGKFTTVAPVKTINAGFQLADGQTVGIAAPVIIQFDSPISDKAAVERALTVTTDPPVEGGWAWLPDEAQGARVHWRPREYYPAGTTVDVDAKLYGLPFGDGAYGAQDMSLHFQIGRRQVVKAEVSSHRIQVVTDAGVIMDFPCSYGEADLARNVTRNGIHVVTEKYSDFYMSNPAAGYSHIHERWAVRISNNGEFIHANPMSAGAQGNSNVTNGCINLSTENAEQYYRSAVYGDPVEVTGSSIQLSYADGDIWDWAVDWDTWVSMSALPPPAAKPAATQIPVTAPVTPSDAPTPSGTPTTTNGPGG</sequence>
<dbReference type="EC" id="2.3.2.-"/>
<dbReference type="EMBL" id="AL123456">
    <property type="protein sequence ID" value="CCP43217.1"/>
    <property type="molecule type" value="Genomic_DNA"/>
</dbReference>
<dbReference type="PIR" id="F70743">
    <property type="entry name" value="F70743"/>
</dbReference>
<dbReference type="RefSeq" id="NP_214997.1">
    <property type="nucleotide sequence ID" value="NC_000962.3"/>
</dbReference>
<dbReference type="PDB" id="1U8R">
    <property type="method" value="X-ray"/>
    <property type="resolution" value="2.75 A"/>
    <property type="chains" value="A/B/C/D/G/H/I/J=1-230"/>
</dbReference>
<dbReference type="PDB" id="2ISZ">
    <property type="method" value="X-ray"/>
    <property type="resolution" value="2.40 A"/>
    <property type="chains" value="A/B/C/D=1-140"/>
</dbReference>
<dbReference type="PDB" id="2IT0">
    <property type="method" value="X-ray"/>
    <property type="resolution" value="2.60 A"/>
    <property type="chains" value="A/B/C/D=1-140"/>
</dbReference>
<dbReference type="PDB" id="6D5A">
    <property type="method" value="X-ray"/>
    <property type="resolution" value="2.62 A"/>
    <property type="chains" value="A=50-416"/>
</dbReference>
<dbReference type="PDBsum" id="1U8R"/>
<dbReference type="PDBsum" id="2ISZ"/>
<dbReference type="PDBsum" id="2IT0"/>
<dbReference type="PDBsum" id="6D5A"/>
<dbReference type="SMR" id="P9WKV3"/>
<dbReference type="STRING" id="83332.Rv0483"/>
<dbReference type="PaxDb" id="83332-Rv0483"/>
<dbReference type="DNASU" id="887167"/>
<dbReference type="GeneID" id="887167"/>
<dbReference type="KEGG" id="mtu:Rv0483"/>
<dbReference type="KEGG" id="mtv:RVBD_0483"/>
<dbReference type="PATRIC" id="fig|83332.111.peg.530"/>
<dbReference type="TubercuList" id="Rv0483"/>
<dbReference type="eggNOG" id="COG1376">
    <property type="taxonomic scope" value="Bacteria"/>
</dbReference>
<dbReference type="InParanoid" id="P9WKV3"/>
<dbReference type="OrthoDB" id="5242354at2"/>
<dbReference type="PhylomeDB" id="P9WKV3"/>
<dbReference type="UniPathway" id="UPA00219"/>
<dbReference type="Proteomes" id="UP000001584">
    <property type="component" value="Chromosome"/>
</dbReference>
<dbReference type="GO" id="GO:0005576">
    <property type="term" value="C:extracellular region"/>
    <property type="evidence" value="ECO:0007005"/>
    <property type="project" value="MTBBASE"/>
</dbReference>
<dbReference type="GO" id="GO:0016746">
    <property type="term" value="F:acyltransferase activity"/>
    <property type="evidence" value="ECO:0007669"/>
    <property type="project" value="UniProtKB-KW"/>
</dbReference>
<dbReference type="GO" id="GO:0071972">
    <property type="term" value="F:peptidoglycan L,D-transpeptidase activity"/>
    <property type="evidence" value="ECO:0000318"/>
    <property type="project" value="GO_Central"/>
</dbReference>
<dbReference type="GO" id="GO:0071555">
    <property type="term" value="P:cell wall organization"/>
    <property type="evidence" value="ECO:0007669"/>
    <property type="project" value="UniProtKB-KW"/>
</dbReference>
<dbReference type="GO" id="GO:0018104">
    <property type="term" value="P:peptidoglycan-protein cross-linking"/>
    <property type="evidence" value="ECO:0000318"/>
    <property type="project" value="GO_Central"/>
</dbReference>
<dbReference type="GO" id="GO:0008360">
    <property type="term" value="P:regulation of cell shape"/>
    <property type="evidence" value="ECO:0007669"/>
    <property type="project" value="UniProtKB-KW"/>
</dbReference>
<dbReference type="CDD" id="cd13431">
    <property type="entry name" value="LDT_IgD_like_1"/>
    <property type="match status" value="1"/>
</dbReference>
<dbReference type="CDD" id="cd13432">
    <property type="entry name" value="LDT_IgD_like_2"/>
    <property type="match status" value="1"/>
</dbReference>
<dbReference type="CDD" id="cd16913">
    <property type="entry name" value="YkuD_like"/>
    <property type="match status" value="1"/>
</dbReference>
<dbReference type="FunFam" id="2.40.440.10:FF:000009">
    <property type="entry name" value="L,D-transpeptidase"/>
    <property type="match status" value="1"/>
</dbReference>
<dbReference type="FunFam" id="2.60.40.3780:FF:000001">
    <property type="entry name" value="L,D-transpeptidase 2"/>
    <property type="match status" value="1"/>
</dbReference>
<dbReference type="Gene3D" id="2.60.40.3710">
    <property type="match status" value="1"/>
</dbReference>
<dbReference type="Gene3D" id="2.60.40.3780">
    <property type="match status" value="1"/>
</dbReference>
<dbReference type="Gene3D" id="2.40.440.10">
    <property type="entry name" value="L,D-transpeptidase catalytic domain-like"/>
    <property type="match status" value="1"/>
</dbReference>
<dbReference type="InterPro" id="IPR041280">
    <property type="entry name" value="Big_10"/>
</dbReference>
<dbReference type="InterPro" id="IPR050979">
    <property type="entry name" value="LD-transpeptidase"/>
</dbReference>
<dbReference type="InterPro" id="IPR005490">
    <property type="entry name" value="LD_TPept_cat_dom"/>
</dbReference>
<dbReference type="InterPro" id="IPR038063">
    <property type="entry name" value="Transpep_catalytic_dom"/>
</dbReference>
<dbReference type="PANTHER" id="PTHR30582">
    <property type="entry name" value="L,D-TRANSPEPTIDASE"/>
    <property type="match status" value="1"/>
</dbReference>
<dbReference type="PANTHER" id="PTHR30582:SF2">
    <property type="entry name" value="L,D-TRANSPEPTIDASE YCIB-RELATED"/>
    <property type="match status" value="1"/>
</dbReference>
<dbReference type="Pfam" id="PF17964">
    <property type="entry name" value="Big_10"/>
    <property type="match status" value="1"/>
</dbReference>
<dbReference type="Pfam" id="PF03734">
    <property type="entry name" value="YkuD"/>
    <property type="match status" value="1"/>
</dbReference>
<dbReference type="SUPFAM" id="SSF141523">
    <property type="entry name" value="L,D-transpeptidase catalytic domain-like"/>
    <property type="match status" value="1"/>
</dbReference>
<dbReference type="PROSITE" id="PS52029">
    <property type="entry name" value="LD_TPASE"/>
    <property type="match status" value="1"/>
</dbReference>